<gene>
    <name type="primary">lafX</name>
    <name type="ordered locus">LJ_0769.1</name>
    <name type="ORF">LJ_0769b</name>
</gene>
<proteinExistence type="inferred from homology"/>
<accession>Q48509</accession>
<feature type="propeptide" id="PRO_0000002755" evidence="1">
    <location>
        <begin position="1"/>
        <end position="14"/>
    </location>
</feature>
<feature type="chain" id="PRO_0000002756" description="Bacteriocin lactacin-F subunit LafX">
    <location>
        <begin position="15"/>
        <end position="62"/>
    </location>
</feature>
<comment type="function">
    <text>Heat stable bacteriocin active against Enterococcus faecalis and other Lactobacilli.</text>
</comment>
<comment type="subunit">
    <text>This bacteriocin depends upon the complementation of two peptides for activity: LafA and LafX. Associated with a 180 kDa bacteriocin complex.</text>
</comment>
<comment type="similarity">
    <text evidence="2">Belongs to the bacteriocin class IIB family.</text>
</comment>
<evidence type="ECO:0000250" key="1"/>
<evidence type="ECO:0000305" key="2"/>
<protein>
    <recommendedName>
        <fullName>Bacteriocin lactacin-F subunit LafX</fullName>
    </recommendedName>
</protein>
<sequence>MKLNDKELSKIVGGNRWGDTVLSAASGAGTGIKACKSFGPWGMAICGVGGAAIGGYFGYTHN</sequence>
<name>LAFX_LACJO</name>
<keyword id="KW-0044">Antibiotic</keyword>
<keyword id="KW-0929">Antimicrobial</keyword>
<keyword id="KW-0078">Bacteriocin</keyword>
<dbReference type="EMBL" id="M57961">
    <property type="protein sequence ID" value="AAA16637.1"/>
    <property type="molecule type" value="Unassigned_DNA"/>
</dbReference>
<dbReference type="EMBL" id="AE017198">
    <property type="protein sequence ID" value="AAS08589.1"/>
    <property type="molecule type" value="Genomic_DNA"/>
</dbReference>
<dbReference type="RefSeq" id="WP_011161712.1">
    <property type="nucleotide sequence ID" value="NC_005362.1"/>
</dbReference>
<dbReference type="SMR" id="Q48509"/>
<dbReference type="KEGG" id="ljo:LJ_0769b"/>
<dbReference type="HOGENOM" id="CLU_171152_1_0_9"/>
<dbReference type="Proteomes" id="UP000000581">
    <property type="component" value="Chromosome"/>
</dbReference>
<dbReference type="GO" id="GO:0042742">
    <property type="term" value="P:defense response to bacterium"/>
    <property type="evidence" value="ECO:0007669"/>
    <property type="project" value="UniProtKB-KW"/>
</dbReference>
<dbReference type="GO" id="GO:0031640">
    <property type="term" value="P:killing of cells of another organism"/>
    <property type="evidence" value="ECO:0007669"/>
    <property type="project" value="UniProtKB-KW"/>
</dbReference>
<dbReference type="InterPro" id="IPR019493">
    <property type="entry name" value="Bacteriocin_IIb_lactacin-rel"/>
</dbReference>
<dbReference type="InterPro" id="IPR010133">
    <property type="entry name" value="Bacteriocin_signal_seq"/>
</dbReference>
<dbReference type="NCBIfam" id="TIGR01847">
    <property type="entry name" value="bacteriocin_sig"/>
    <property type="match status" value="1"/>
</dbReference>
<dbReference type="Pfam" id="PF10439">
    <property type="entry name" value="Bacteriocin_IIc"/>
    <property type="match status" value="1"/>
</dbReference>
<reference key="1">
    <citation type="journal article" date="1993" name="Appl. Environ. Microbiol.">
        <title>Molecular analysis of the lactacin F operon.</title>
        <authorList>
            <person name="Fremaux C."/>
            <person name="Ahn C."/>
            <person name="Klaenhammer T.R."/>
        </authorList>
    </citation>
    <scope>NUCLEOTIDE SEQUENCE [GENOMIC DNA]</scope>
    <source>
        <strain>ATCC 11506 / JCM 1101 / NBRC 13952 / NCIMB 8795 / R-26 / VPI 11088</strain>
    </source>
</reference>
<reference key="2">
    <citation type="journal article" date="2004" name="Proc. Natl. Acad. Sci. U.S.A.">
        <title>The genome sequence of the probiotic intestinal bacterium Lactobacillus johnsonii NCC 533.</title>
        <authorList>
            <person name="Pridmore R.D."/>
            <person name="Berger B."/>
            <person name="Desiere F."/>
            <person name="Vilanova D."/>
            <person name="Barretto C."/>
            <person name="Pittet A.-C."/>
            <person name="Zwahlen M.-C."/>
            <person name="Rouvet M."/>
            <person name="Altermann E."/>
            <person name="Barrangou R."/>
            <person name="Mollet B."/>
            <person name="Mercenier A."/>
            <person name="Klaenhammer T."/>
            <person name="Arigoni F."/>
            <person name="Schell M.A."/>
        </authorList>
    </citation>
    <scope>NUCLEOTIDE SEQUENCE [LARGE SCALE GENOMIC DNA]</scope>
    <source>
        <strain>CNCM I-1225 / La1 / NCC 533</strain>
    </source>
</reference>
<organism>
    <name type="scientific">Lactobacillus johnsonii (strain CNCM I-12250 / La1 / NCC 533)</name>
    <dbReference type="NCBI Taxonomy" id="257314"/>
    <lineage>
        <taxon>Bacteria</taxon>
        <taxon>Bacillati</taxon>
        <taxon>Bacillota</taxon>
        <taxon>Bacilli</taxon>
        <taxon>Lactobacillales</taxon>
        <taxon>Lactobacillaceae</taxon>
        <taxon>Lactobacillus</taxon>
    </lineage>
</organism>